<comment type="catalytic activity">
    <reaction evidence="1">
        <text>tRNA(Phe) + L-phenylalanine + ATP = L-phenylalanyl-tRNA(Phe) + AMP + diphosphate + H(+)</text>
        <dbReference type="Rhea" id="RHEA:19413"/>
        <dbReference type="Rhea" id="RHEA-COMP:9668"/>
        <dbReference type="Rhea" id="RHEA-COMP:9699"/>
        <dbReference type="ChEBI" id="CHEBI:15378"/>
        <dbReference type="ChEBI" id="CHEBI:30616"/>
        <dbReference type="ChEBI" id="CHEBI:33019"/>
        <dbReference type="ChEBI" id="CHEBI:58095"/>
        <dbReference type="ChEBI" id="CHEBI:78442"/>
        <dbReference type="ChEBI" id="CHEBI:78531"/>
        <dbReference type="ChEBI" id="CHEBI:456215"/>
        <dbReference type="EC" id="6.1.1.20"/>
    </reaction>
</comment>
<comment type="cofactor">
    <cofactor evidence="1">
        <name>Mg(2+)</name>
        <dbReference type="ChEBI" id="CHEBI:18420"/>
    </cofactor>
    <text evidence="1">Binds 2 magnesium ions per tetramer.</text>
</comment>
<comment type="subunit">
    <text evidence="1">Tetramer of two alpha and two beta subunits.</text>
</comment>
<comment type="subcellular location">
    <subcellularLocation>
        <location evidence="1">Cytoplasm</location>
    </subcellularLocation>
</comment>
<comment type="similarity">
    <text evidence="1">Belongs to the class-II aminoacyl-tRNA synthetase family. Phe-tRNA synthetase alpha subunit type 1 subfamily.</text>
</comment>
<organism>
    <name type="scientific">Coxiella burnetii (strain RSA 331 / Henzerling II)</name>
    <dbReference type="NCBI Taxonomy" id="360115"/>
    <lineage>
        <taxon>Bacteria</taxon>
        <taxon>Pseudomonadati</taxon>
        <taxon>Pseudomonadota</taxon>
        <taxon>Gammaproteobacteria</taxon>
        <taxon>Legionellales</taxon>
        <taxon>Coxiellaceae</taxon>
        <taxon>Coxiella</taxon>
    </lineage>
</organism>
<accession>A9N8K1</accession>
<protein>
    <recommendedName>
        <fullName evidence="1">Phenylalanine--tRNA ligase alpha subunit</fullName>
        <ecNumber evidence="1">6.1.1.20</ecNumber>
    </recommendedName>
    <alternativeName>
        <fullName evidence="1">Phenylalanyl-tRNA synthetase alpha subunit</fullName>
        <shortName evidence="1">PheRS</shortName>
    </alternativeName>
</protein>
<evidence type="ECO:0000255" key="1">
    <source>
        <dbReference type="HAMAP-Rule" id="MF_00281"/>
    </source>
</evidence>
<name>SYFA_COXBR</name>
<sequence length="328" mass="37850">MQNQLNALLQSAKKSVADAQSEIVLEEIRVDYLGKKGKLTELLKSVGQMPADQRPLLGKAVNEIKREIQQLLNAKSTQLREKSLQEKLNKEKVDITLRGRYDHLGAIHPISRVSERVSQLFSMLGFQIAEGPEIENEYYNFEALNIPADHPARTMADTFYFSGDKLLRTHTSPVQIREMEKQGVPIRLIALGRVYRRDLDQTHTPMFHQVEGLVIDKRSTFANLKGLLQQFLNCFFEKDVRLRFRPSYFPFTEPSAEVDIYQPRTDKWLEVLGCGMVHPNVLRNLNIDPDEYSGFAFGIGLDRLAMLRYEVTDLRLFFENDLRFLGQF</sequence>
<proteinExistence type="inferred from homology"/>
<gene>
    <name evidence="1" type="primary">pheS</name>
    <name type="ordered locus">COXBURSA331_A1474</name>
</gene>
<feature type="chain" id="PRO_1000078834" description="Phenylalanine--tRNA ligase alpha subunit">
    <location>
        <begin position="1"/>
        <end position="328"/>
    </location>
</feature>
<feature type="binding site" evidence="1">
    <location>
        <position position="253"/>
    </location>
    <ligand>
        <name>Mg(2+)</name>
        <dbReference type="ChEBI" id="CHEBI:18420"/>
        <note>shared with beta subunit</note>
    </ligand>
</feature>
<keyword id="KW-0030">Aminoacyl-tRNA synthetase</keyword>
<keyword id="KW-0067">ATP-binding</keyword>
<keyword id="KW-0963">Cytoplasm</keyword>
<keyword id="KW-0436">Ligase</keyword>
<keyword id="KW-0460">Magnesium</keyword>
<keyword id="KW-0479">Metal-binding</keyword>
<keyword id="KW-0547">Nucleotide-binding</keyword>
<keyword id="KW-0648">Protein biosynthesis</keyword>
<reference key="1">
    <citation type="submission" date="2007-11" db="EMBL/GenBank/DDBJ databases">
        <title>Genome sequencing of phylogenetically and phenotypically diverse Coxiella burnetii isolates.</title>
        <authorList>
            <person name="Seshadri R."/>
            <person name="Samuel J.E."/>
        </authorList>
    </citation>
    <scope>NUCLEOTIDE SEQUENCE [LARGE SCALE GENOMIC DNA]</scope>
    <source>
        <strain>RSA 331 / Henzerling II</strain>
    </source>
</reference>
<dbReference type="EC" id="6.1.1.20" evidence="1"/>
<dbReference type="EMBL" id="CP000890">
    <property type="protein sequence ID" value="ABX77959.1"/>
    <property type="molecule type" value="Genomic_DNA"/>
</dbReference>
<dbReference type="RefSeq" id="WP_010958149.1">
    <property type="nucleotide sequence ID" value="NC_010117.1"/>
</dbReference>
<dbReference type="SMR" id="A9N8K1"/>
<dbReference type="KEGG" id="cbs:COXBURSA331_A1474"/>
<dbReference type="HOGENOM" id="CLU_025086_0_1_6"/>
<dbReference type="GO" id="GO:0005737">
    <property type="term" value="C:cytoplasm"/>
    <property type="evidence" value="ECO:0007669"/>
    <property type="project" value="UniProtKB-SubCell"/>
</dbReference>
<dbReference type="GO" id="GO:0005524">
    <property type="term" value="F:ATP binding"/>
    <property type="evidence" value="ECO:0007669"/>
    <property type="project" value="UniProtKB-UniRule"/>
</dbReference>
<dbReference type="GO" id="GO:0000287">
    <property type="term" value="F:magnesium ion binding"/>
    <property type="evidence" value="ECO:0007669"/>
    <property type="project" value="UniProtKB-UniRule"/>
</dbReference>
<dbReference type="GO" id="GO:0004826">
    <property type="term" value="F:phenylalanine-tRNA ligase activity"/>
    <property type="evidence" value="ECO:0007669"/>
    <property type="project" value="UniProtKB-UniRule"/>
</dbReference>
<dbReference type="GO" id="GO:0000049">
    <property type="term" value="F:tRNA binding"/>
    <property type="evidence" value="ECO:0007669"/>
    <property type="project" value="InterPro"/>
</dbReference>
<dbReference type="GO" id="GO:0006432">
    <property type="term" value="P:phenylalanyl-tRNA aminoacylation"/>
    <property type="evidence" value="ECO:0007669"/>
    <property type="project" value="UniProtKB-UniRule"/>
</dbReference>
<dbReference type="CDD" id="cd00496">
    <property type="entry name" value="PheRS_alpha_core"/>
    <property type="match status" value="1"/>
</dbReference>
<dbReference type="FunFam" id="3.30.930.10:FF:000003">
    <property type="entry name" value="Phenylalanine--tRNA ligase alpha subunit"/>
    <property type="match status" value="1"/>
</dbReference>
<dbReference type="Gene3D" id="3.30.930.10">
    <property type="entry name" value="Bira Bifunctional Protein, Domain 2"/>
    <property type="match status" value="1"/>
</dbReference>
<dbReference type="HAMAP" id="MF_00281">
    <property type="entry name" value="Phe_tRNA_synth_alpha1"/>
    <property type="match status" value="1"/>
</dbReference>
<dbReference type="InterPro" id="IPR006195">
    <property type="entry name" value="aa-tRNA-synth_II"/>
</dbReference>
<dbReference type="InterPro" id="IPR045864">
    <property type="entry name" value="aa-tRNA-synth_II/BPL/LPL"/>
</dbReference>
<dbReference type="InterPro" id="IPR004529">
    <property type="entry name" value="Phe-tRNA-synth_IIc_asu"/>
</dbReference>
<dbReference type="InterPro" id="IPR004188">
    <property type="entry name" value="Phe-tRNA_ligase_II_N"/>
</dbReference>
<dbReference type="InterPro" id="IPR022911">
    <property type="entry name" value="Phe_tRNA_ligase_alpha1_bac"/>
</dbReference>
<dbReference type="InterPro" id="IPR002319">
    <property type="entry name" value="Phenylalanyl-tRNA_Synthase"/>
</dbReference>
<dbReference type="InterPro" id="IPR010978">
    <property type="entry name" value="tRNA-bd_arm"/>
</dbReference>
<dbReference type="NCBIfam" id="TIGR00468">
    <property type="entry name" value="pheS"/>
    <property type="match status" value="1"/>
</dbReference>
<dbReference type="PANTHER" id="PTHR11538:SF41">
    <property type="entry name" value="PHENYLALANINE--TRNA LIGASE, MITOCHONDRIAL"/>
    <property type="match status" value="1"/>
</dbReference>
<dbReference type="PANTHER" id="PTHR11538">
    <property type="entry name" value="PHENYLALANYL-TRNA SYNTHETASE"/>
    <property type="match status" value="1"/>
</dbReference>
<dbReference type="Pfam" id="PF02912">
    <property type="entry name" value="Phe_tRNA-synt_N"/>
    <property type="match status" value="1"/>
</dbReference>
<dbReference type="Pfam" id="PF01409">
    <property type="entry name" value="tRNA-synt_2d"/>
    <property type="match status" value="1"/>
</dbReference>
<dbReference type="SUPFAM" id="SSF55681">
    <property type="entry name" value="Class II aaRS and biotin synthetases"/>
    <property type="match status" value="1"/>
</dbReference>
<dbReference type="SUPFAM" id="SSF46589">
    <property type="entry name" value="tRNA-binding arm"/>
    <property type="match status" value="1"/>
</dbReference>
<dbReference type="PROSITE" id="PS50862">
    <property type="entry name" value="AA_TRNA_LIGASE_II"/>
    <property type="match status" value="1"/>
</dbReference>